<gene>
    <name evidence="1" type="primary">orn</name>
    <name type="ordered locus">YpsIP31758_3661</name>
</gene>
<evidence type="ECO:0000255" key="1">
    <source>
        <dbReference type="HAMAP-Rule" id="MF_00045"/>
    </source>
</evidence>
<feature type="chain" id="PRO_1000057313" description="Oligoribonuclease">
    <location>
        <begin position="1"/>
        <end position="181"/>
    </location>
</feature>
<feature type="domain" description="Exonuclease" evidence="1">
    <location>
        <begin position="8"/>
        <end position="171"/>
    </location>
</feature>
<feature type="active site" evidence="1">
    <location>
        <position position="129"/>
    </location>
</feature>
<comment type="function">
    <text evidence="1">3'-to-5' exoribonuclease specific for small oligoribonucleotides.</text>
</comment>
<comment type="subcellular location">
    <subcellularLocation>
        <location evidence="1">Cytoplasm</location>
    </subcellularLocation>
</comment>
<comment type="similarity">
    <text evidence="1">Belongs to the oligoribonuclease family.</text>
</comment>
<keyword id="KW-0963">Cytoplasm</keyword>
<keyword id="KW-0269">Exonuclease</keyword>
<keyword id="KW-0378">Hydrolase</keyword>
<keyword id="KW-0540">Nuclease</keyword>
<proteinExistence type="inferred from homology"/>
<organism>
    <name type="scientific">Yersinia pseudotuberculosis serotype O:1b (strain IP 31758)</name>
    <dbReference type="NCBI Taxonomy" id="349747"/>
    <lineage>
        <taxon>Bacteria</taxon>
        <taxon>Pseudomonadati</taxon>
        <taxon>Pseudomonadota</taxon>
        <taxon>Gammaproteobacteria</taxon>
        <taxon>Enterobacterales</taxon>
        <taxon>Yersiniaceae</taxon>
        <taxon>Yersinia</taxon>
    </lineage>
</organism>
<name>ORN_YERP3</name>
<protein>
    <recommendedName>
        <fullName evidence="1">Oligoribonuclease</fullName>
        <ecNumber evidence="1">3.1.15.-</ecNumber>
    </recommendedName>
</protein>
<sequence>MAENQNNLIWIDLEMTGLDPERDRIIEIATLVTDANLNILAEGPVLAVHQSAEQLGLMDEWNVRTHTGSGLVERVKTSPFNDRDAELQTIEFLKQWVPAGVSPICGNSVGQDRRFLFRYMPELEAYFHYRYVDVSTLKELARRWKPEILAGFKKQNTHQALDDIRESVAELAYYREHFIQS</sequence>
<accession>A7FMY7</accession>
<dbReference type="EC" id="3.1.15.-" evidence="1"/>
<dbReference type="EMBL" id="CP000720">
    <property type="protein sequence ID" value="ABS48920.1"/>
    <property type="molecule type" value="Genomic_DNA"/>
</dbReference>
<dbReference type="RefSeq" id="WP_011191612.1">
    <property type="nucleotide sequence ID" value="NC_009708.1"/>
</dbReference>
<dbReference type="SMR" id="A7FMY7"/>
<dbReference type="GeneID" id="49787587"/>
<dbReference type="KEGG" id="ypi:YpsIP31758_3661"/>
<dbReference type="HOGENOM" id="CLU_064761_2_0_6"/>
<dbReference type="Proteomes" id="UP000002412">
    <property type="component" value="Chromosome"/>
</dbReference>
<dbReference type="GO" id="GO:0005737">
    <property type="term" value="C:cytoplasm"/>
    <property type="evidence" value="ECO:0007669"/>
    <property type="project" value="UniProtKB-SubCell"/>
</dbReference>
<dbReference type="GO" id="GO:0000175">
    <property type="term" value="F:3'-5'-RNA exonuclease activity"/>
    <property type="evidence" value="ECO:0007669"/>
    <property type="project" value="InterPro"/>
</dbReference>
<dbReference type="GO" id="GO:0003676">
    <property type="term" value="F:nucleic acid binding"/>
    <property type="evidence" value="ECO:0007669"/>
    <property type="project" value="InterPro"/>
</dbReference>
<dbReference type="GO" id="GO:0006259">
    <property type="term" value="P:DNA metabolic process"/>
    <property type="evidence" value="ECO:0007669"/>
    <property type="project" value="UniProtKB-ARBA"/>
</dbReference>
<dbReference type="CDD" id="cd06135">
    <property type="entry name" value="Orn"/>
    <property type="match status" value="1"/>
</dbReference>
<dbReference type="FunFam" id="3.30.420.10:FF:000003">
    <property type="entry name" value="Oligoribonuclease"/>
    <property type="match status" value="1"/>
</dbReference>
<dbReference type="Gene3D" id="3.30.420.10">
    <property type="entry name" value="Ribonuclease H-like superfamily/Ribonuclease H"/>
    <property type="match status" value="1"/>
</dbReference>
<dbReference type="HAMAP" id="MF_00045">
    <property type="entry name" value="Oligoribonuclease"/>
    <property type="match status" value="1"/>
</dbReference>
<dbReference type="InterPro" id="IPR013520">
    <property type="entry name" value="Exonuclease_RNaseT/DNA_pol3"/>
</dbReference>
<dbReference type="InterPro" id="IPR022894">
    <property type="entry name" value="Oligoribonuclease"/>
</dbReference>
<dbReference type="InterPro" id="IPR012337">
    <property type="entry name" value="RNaseH-like_sf"/>
</dbReference>
<dbReference type="InterPro" id="IPR036397">
    <property type="entry name" value="RNaseH_sf"/>
</dbReference>
<dbReference type="NCBIfam" id="NF003765">
    <property type="entry name" value="PRK05359.1"/>
    <property type="match status" value="1"/>
</dbReference>
<dbReference type="PANTHER" id="PTHR11046">
    <property type="entry name" value="OLIGORIBONUCLEASE, MITOCHONDRIAL"/>
    <property type="match status" value="1"/>
</dbReference>
<dbReference type="PANTHER" id="PTHR11046:SF0">
    <property type="entry name" value="OLIGORIBONUCLEASE, MITOCHONDRIAL"/>
    <property type="match status" value="1"/>
</dbReference>
<dbReference type="Pfam" id="PF00929">
    <property type="entry name" value="RNase_T"/>
    <property type="match status" value="1"/>
</dbReference>
<dbReference type="SMART" id="SM00479">
    <property type="entry name" value="EXOIII"/>
    <property type="match status" value="1"/>
</dbReference>
<dbReference type="SUPFAM" id="SSF53098">
    <property type="entry name" value="Ribonuclease H-like"/>
    <property type="match status" value="1"/>
</dbReference>
<reference key="1">
    <citation type="journal article" date="2007" name="PLoS Genet.">
        <title>The complete genome sequence of Yersinia pseudotuberculosis IP31758, the causative agent of Far East scarlet-like fever.</title>
        <authorList>
            <person name="Eppinger M."/>
            <person name="Rosovitz M.J."/>
            <person name="Fricke W.F."/>
            <person name="Rasko D.A."/>
            <person name="Kokorina G."/>
            <person name="Fayolle C."/>
            <person name="Lindler L.E."/>
            <person name="Carniel E."/>
            <person name="Ravel J."/>
        </authorList>
    </citation>
    <scope>NUCLEOTIDE SEQUENCE [LARGE SCALE GENOMIC DNA]</scope>
    <source>
        <strain>IP 31758</strain>
    </source>
</reference>